<protein>
    <recommendedName>
        <fullName>Molybdopterin molybdenumtransferase</fullName>
        <shortName>MPT Mo-transferase</shortName>
        <ecNumber>2.10.1.1</ecNumber>
    </recommendedName>
</protein>
<feature type="chain" id="PRO_0000170995" description="Molybdopterin molybdenumtransferase">
    <location>
        <begin position="1"/>
        <end position="419"/>
    </location>
</feature>
<dbReference type="EC" id="2.10.1.1"/>
<dbReference type="EMBL" id="BA000017">
    <property type="protein sequence ID" value="BAB58435.1"/>
    <property type="molecule type" value="Genomic_DNA"/>
</dbReference>
<dbReference type="SMR" id="P65407"/>
<dbReference type="KEGG" id="sav:SAV2273"/>
<dbReference type="HOGENOM" id="CLU_010186_7_1_9"/>
<dbReference type="PhylomeDB" id="P65407"/>
<dbReference type="UniPathway" id="UPA00344"/>
<dbReference type="Proteomes" id="UP000002481">
    <property type="component" value="Chromosome"/>
</dbReference>
<dbReference type="GO" id="GO:0005829">
    <property type="term" value="C:cytosol"/>
    <property type="evidence" value="ECO:0007669"/>
    <property type="project" value="TreeGrafter"/>
</dbReference>
<dbReference type="GO" id="GO:0046872">
    <property type="term" value="F:metal ion binding"/>
    <property type="evidence" value="ECO:0007669"/>
    <property type="project" value="UniProtKB-KW"/>
</dbReference>
<dbReference type="GO" id="GO:0061599">
    <property type="term" value="F:molybdopterin molybdotransferase activity"/>
    <property type="evidence" value="ECO:0007669"/>
    <property type="project" value="UniProtKB-EC"/>
</dbReference>
<dbReference type="GO" id="GO:0006777">
    <property type="term" value="P:Mo-molybdopterin cofactor biosynthetic process"/>
    <property type="evidence" value="ECO:0007669"/>
    <property type="project" value="UniProtKB-KW"/>
</dbReference>
<dbReference type="CDD" id="cd00887">
    <property type="entry name" value="MoeA"/>
    <property type="match status" value="1"/>
</dbReference>
<dbReference type="FunFam" id="2.170.190.11:FF:000001">
    <property type="entry name" value="Molybdopterin molybdenumtransferase"/>
    <property type="match status" value="1"/>
</dbReference>
<dbReference type="FunFam" id="2.40.340.10:FF:000002">
    <property type="entry name" value="Molybdopterin molybdenumtransferase"/>
    <property type="match status" value="1"/>
</dbReference>
<dbReference type="FunFam" id="3.40.980.10:FF:000004">
    <property type="entry name" value="Molybdopterin molybdenumtransferase"/>
    <property type="match status" value="1"/>
</dbReference>
<dbReference type="Gene3D" id="3.40.980.10">
    <property type="entry name" value="MoaB/Mog-like domain"/>
    <property type="match status" value="1"/>
</dbReference>
<dbReference type="Gene3D" id="2.40.340.10">
    <property type="entry name" value="MoeA, C-terminal, domain IV"/>
    <property type="match status" value="1"/>
</dbReference>
<dbReference type="Gene3D" id="3.90.105.10">
    <property type="entry name" value="Molybdopterin biosynthesis moea protein, domain 2"/>
    <property type="match status" value="1"/>
</dbReference>
<dbReference type="Gene3D" id="2.170.190.11">
    <property type="entry name" value="Molybdopterin biosynthesis moea protein, domain 3"/>
    <property type="match status" value="1"/>
</dbReference>
<dbReference type="InterPro" id="IPR036425">
    <property type="entry name" value="MoaB/Mog-like_dom_sf"/>
</dbReference>
<dbReference type="InterPro" id="IPR001453">
    <property type="entry name" value="MoaB/Mog_dom"/>
</dbReference>
<dbReference type="InterPro" id="IPR038987">
    <property type="entry name" value="MoeA-like"/>
</dbReference>
<dbReference type="InterPro" id="IPR005111">
    <property type="entry name" value="MoeA_C_domain_IV"/>
</dbReference>
<dbReference type="InterPro" id="IPR036688">
    <property type="entry name" value="MoeA_C_domain_IV_sf"/>
</dbReference>
<dbReference type="InterPro" id="IPR005110">
    <property type="entry name" value="MoeA_linker/N"/>
</dbReference>
<dbReference type="InterPro" id="IPR036135">
    <property type="entry name" value="MoeA_linker/N_sf"/>
</dbReference>
<dbReference type="NCBIfam" id="NF045515">
    <property type="entry name" value="Glp_gephyrin"/>
    <property type="match status" value="1"/>
</dbReference>
<dbReference type="NCBIfam" id="TIGR00177">
    <property type="entry name" value="molyb_syn"/>
    <property type="match status" value="1"/>
</dbReference>
<dbReference type="PANTHER" id="PTHR10192:SF5">
    <property type="entry name" value="GEPHYRIN"/>
    <property type="match status" value="1"/>
</dbReference>
<dbReference type="PANTHER" id="PTHR10192">
    <property type="entry name" value="MOLYBDOPTERIN BIOSYNTHESIS PROTEIN"/>
    <property type="match status" value="1"/>
</dbReference>
<dbReference type="Pfam" id="PF00994">
    <property type="entry name" value="MoCF_biosynth"/>
    <property type="match status" value="1"/>
</dbReference>
<dbReference type="Pfam" id="PF03454">
    <property type="entry name" value="MoeA_C"/>
    <property type="match status" value="1"/>
</dbReference>
<dbReference type="Pfam" id="PF03453">
    <property type="entry name" value="MoeA_N"/>
    <property type="match status" value="1"/>
</dbReference>
<dbReference type="SMART" id="SM00852">
    <property type="entry name" value="MoCF_biosynth"/>
    <property type="match status" value="1"/>
</dbReference>
<dbReference type="SUPFAM" id="SSF63867">
    <property type="entry name" value="MoeA C-terminal domain-like"/>
    <property type="match status" value="1"/>
</dbReference>
<dbReference type="SUPFAM" id="SSF63882">
    <property type="entry name" value="MoeA N-terminal region -like"/>
    <property type="match status" value="1"/>
</dbReference>
<dbReference type="SUPFAM" id="SSF53218">
    <property type="entry name" value="Molybdenum cofactor biosynthesis proteins"/>
    <property type="match status" value="1"/>
</dbReference>
<organism>
    <name type="scientific">Staphylococcus aureus (strain Mu50 / ATCC 700699)</name>
    <dbReference type="NCBI Taxonomy" id="158878"/>
    <lineage>
        <taxon>Bacteria</taxon>
        <taxon>Bacillati</taxon>
        <taxon>Bacillota</taxon>
        <taxon>Bacilli</taxon>
        <taxon>Bacillales</taxon>
        <taxon>Staphylococcaceae</taxon>
        <taxon>Staphylococcus</taxon>
    </lineage>
</organism>
<name>MOEA_STAAM</name>
<evidence type="ECO:0000250" key="1"/>
<evidence type="ECO:0000305" key="2"/>
<comment type="function">
    <text evidence="1">Catalyzes the insertion of molybdate into adenylated molybdopterin with the concomitant release of AMP.</text>
</comment>
<comment type="catalytic activity">
    <reaction>
        <text>adenylyl-molybdopterin + molybdate = Mo-molybdopterin + AMP + H(+)</text>
        <dbReference type="Rhea" id="RHEA:35047"/>
        <dbReference type="ChEBI" id="CHEBI:15378"/>
        <dbReference type="ChEBI" id="CHEBI:36264"/>
        <dbReference type="ChEBI" id="CHEBI:62727"/>
        <dbReference type="ChEBI" id="CHEBI:71302"/>
        <dbReference type="ChEBI" id="CHEBI:456215"/>
        <dbReference type="EC" id="2.10.1.1"/>
    </reaction>
</comment>
<comment type="cofactor">
    <cofactor evidence="1">
        <name>Mg(2+)</name>
        <dbReference type="ChEBI" id="CHEBI:18420"/>
    </cofactor>
    <text evidence="1">Binds 1 Mg(2+) ion per subunit.</text>
</comment>
<comment type="pathway">
    <text>Cofactor biosynthesis; molybdopterin biosynthesis.</text>
</comment>
<comment type="similarity">
    <text evidence="2">Belongs to the MoeA family.</text>
</comment>
<gene>
    <name type="primary">moeA</name>
    <name type="ordered locus">SAV2273</name>
</gene>
<reference key="1">
    <citation type="journal article" date="2001" name="Lancet">
        <title>Whole genome sequencing of meticillin-resistant Staphylococcus aureus.</title>
        <authorList>
            <person name="Kuroda M."/>
            <person name="Ohta T."/>
            <person name="Uchiyama I."/>
            <person name="Baba T."/>
            <person name="Yuzawa H."/>
            <person name="Kobayashi I."/>
            <person name="Cui L."/>
            <person name="Oguchi A."/>
            <person name="Aoki K."/>
            <person name="Nagai Y."/>
            <person name="Lian J.-Q."/>
            <person name="Ito T."/>
            <person name="Kanamori M."/>
            <person name="Matsumaru H."/>
            <person name="Maruyama A."/>
            <person name="Murakami H."/>
            <person name="Hosoyama A."/>
            <person name="Mizutani-Ui Y."/>
            <person name="Takahashi N.K."/>
            <person name="Sawano T."/>
            <person name="Inoue R."/>
            <person name="Kaito C."/>
            <person name="Sekimizu K."/>
            <person name="Hirakawa H."/>
            <person name="Kuhara S."/>
            <person name="Goto S."/>
            <person name="Yabuzaki J."/>
            <person name="Kanehisa M."/>
            <person name="Yamashita A."/>
            <person name="Oshima K."/>
            <person name="Furuya K."/>
            <person name="Yoshino C."/>
            <person name="Shiba T."/>
            <person name="Hattori M."/>
            <person name="Ogasawara N."/>
            <person name="Hayashi H."/>
            <person name="Hiramatsu K."/>
        </authorList>
    </citation>
    <scope>NUCLEOTIDE SEQUENCE [LARGE SCALE GENOMIC DNA]</scope>
    <source>
        <strain>Mu50 / ATCC 700699</strain>
    </source>
</reference>
<accession>P65407</accession>
<accession>Q99RZ9</accession>
<proteinExistence type="inferred from homology"/>
<keyword id="KW-0460">Magnesium</keyword>
<keyword id="KW-0479">Metal-binding</keyword>
<keyword id="KW-0500">Molybdenum</keyword>
<keyword id="KW-0501">Molybdenum cofactor biosynthesis</keyword>
<keyword id="KW-0808">Transferase</keyword>
<sequence length="419" mass="44989">MVVEKRNPIPVKEAIQRIVNQQSSMPAITVALEKSLNHILAEDIVATYDIPRFDKSPYDGFAIRSVDSQGASGQNRIEFKVIDHIGAGSVSDKLVGDHEAVRIMTGAQIPNGADAVVMFEQTIELEDTFTIRKPFSKNENISLKGEETKTGDVVLKKGQVINPGAIAVLATYGYAEVKVIKQPSVAVIATGSELLDVNDVLEDGKIRNSNGPMIRALAEKLGLEVGIYKTQKDDLDSGIQVVKEAMEKHDIVITTGGVSVGDFDYLPEIYKAVKAEVLFNKVAMRPGSVTTVAFADGKYLFGLSGNPSACFTGFELFVKPAVKHMCGALEVFPQIIKATLMEDFTKANPFTRFIRAKATLTSAGATVVPSGFNKSGAVVAIAHANCMVMLPGGSRGFKAGHTVDIILTESDAAEEELLL</sequence>